<dbReference type="EC" id="2.1.1.-" evidence="1"/>
<dbReference type="EMBL" id="AY553235">
    <property type="protein sequence ID" value="AAS92548.1"/>
    <property type="molecule type" value="Genomic_DNA"/>
</dbReference>
<dbReference type="RefSeq" id="XP_003842419.1">
    <property type="nucleotide sequence ID" value="XM_003842371.1"/>
</dbReference>
<dbReference type="SMR" id="Q6Q880"/>
<dbReference type="OMA" id="NWVDFFP"/>
<dbReference type="GO" id="GO:0008171">
    <property type="term" value="F:O-methyltransferase activity"/>
    <property type="evidence" value="ECO:0007669"/>
    <property type="project" value="InterPro"/>
</dbReference>
<dbReference type="GO" id="GO:0046983">
    <property type="term" value="F:protein dimerization activity"/>
    <property type="evidence" value="ECO:0007669"/>
    <property type="project" value="InterPro"/>
</dbReference>
<dbReference type="GO" id="GO:0032259">
    <property type="term" value="P:methylation"/>
    <property type="evidence" value="ECO:0007669"/>
    <property type="project" value="UniProtKB-KW"/>
</dbReference>
<dbReference type="GO" id="GO:0044550">
    <property type="term" value="P:secondary metabolite biosynthetic process"/>
    <property type="evidence" value="ECO:0007669"/>
    <property type="project" value="UniProtKB-ARBA"/>
</dbReference>
<dbReference type="CDD" id="cd02440">
    <property type="entry name" value="AdoMet_MTases"/>
    <property type="match status" value="1"/>
</dbReference>
<dbReference type="Gene3D" id="3.40.50.150">
    <property type="entry name" value="Vaccinia Virus protein VP39"/>
    <property type="match status" value="1"/>
</dbReference>
<dbReference type="Gene3D" id="1.10.10.10">
    <property type="entry name" value="Winged helix-like DNA-binding domain superfamily/Winged helix DNA-binding domain"/>
    <property type="match status" value="1"/>
</dbReference>
<dbReference type="InterPro" id="IPR016461">
    <property type="entry name" value="COMT-like"/>
</dbReference>
<dbReference type="InterPro" id="IPR001077">
    <property type="entry name" value="O_MeTrfase_dom"/>
</dbReference>
<dbReference type="InterPro" id="IPR012967">
    <property type="entry name" value="Plant_O-MeTrfase_dimerisation"/>
</dbReference>
<dbReference type="InterPro" id="IPR029063">
    <property type="entry name" value="SAM-dependent_MTases_sf"/>
</dbReference>
<dbReference type="InterPro" id="IPR036388">
    <property type="entry name" value="WH-like_DNA-bd_sf"/>
</dbReference>
<dbReference type="InterPro" id="IPR036390">
    <property type="entry name" value="WH_DNA-bd_sf"/>
</dbReference>
<dbReference type="PANTHER" id="PTHR43712:SF2">
    <property type="entry name" value="O-METHYLTRANSFERASE CICE"/>
    <property type="match status" value="1"/>
</dbReference>
<dbReference type="PANTHER" id="PTHR43712">
    <property type="entry name" value="PUTATIVE (AFU_ORTHOLOGUE AFUA_4G14580)-RELATED"/>
    <property type="match status" value="1"/>
</dbReference>
<dbReference type="Pfam" id="PF08100">
    <property type="entry name" value="Dimerisation"/>
    <property type="match status" value="1"/>
</dbReference>
<dbReference type="Pfam" id="PF00891">
    <property type="entry name" value="Methyltransf_2"/>
    <property type="match status" value="1"/>
</dbReference>
<dbReference type="SUPFAM" id="SSF53335">
    <property type="entry name" value="S-adenosyl-L-methionine-dependent methyltransferases"/>
    <property type="match status" value="1"/>
</dbReference>
<dbReference type="SUPFAM" id="SSF46785">
    <property type="entry name" value="Winged helix' DNA-binding domain"/>
    <property type="match status" value="1"/>
</dbReference>
<dbReference type="PROSITE" id="PS51683">
    <property type="entry name" value="SAM_OMT_II"/>
    <property type="match status" value="1"/>
</dbReference>
<gene>
    <name evidence="6" type="primary">sirM</name>
</gene>
<reference key="1">
    <citation type="journal article" date="2004" name="Mol. Microbiol.">
        <title>The sirodesmin biosynthetic gene cluster of the plant pathogenic fungus Leptosphaeria maculans.</title>
        <authorList>
            <person name="Gardiner D.M."/>
            <person name="Cozijnsen A.J."/>
            <person name="Wilson L.M."/>
            <person name="Pedras M.S."/>
            <person name="Howlett B.J."/>
        </authorList>
    </citation>
    <scope>NUCLEOTIDE SEQUENCE [GENOMIC DNA]</scope>
    <scope>FUNCTION</scope>
</reference>
<reference key="2">
    <citation type="journal article" date="2008" name="Mycol. Res.">
        <title>Biosynthetic gene clusters for epipolythiodioxopiperazines in filamentous fungi.</title>
        <authorList>
            <person name="Fox E.M."/>
            <person name="Howlett B.J."/>
        </authorList>
    </citation>
    <scope>FUNCTION</scope>
</reference>
<reference key="3">
    <citation type="journal article" date="2010" name="Microbiology">
        <title>A tyrosine O-prenyltransferase catalyses the first pathway-specific step in the biosynthesis of sirodesmin PL.</title>
        <authorList>
            <person name="Kremer A."/>
            <person name="Li S.M."/>
        </authorList>
    </citation>
    <scope>FUNCTION</scope>
</reference>
<reference key="4">
    <citation type="journal article" date="2011" name="Appl. Microbiol. Biotechnol.">
        <title>The tyrosine O-prenyltransferase SirD catalyzes O-, N-, and C-prenylations.</title>
        <authorList>
            <person name="Zou H.X."/>
            <person name="Xie X."/>
            <person name="Zheng X.D."/>
            <person name="Li S.M."/>
        </authorList>
    </citation>
    <scope>FUNCTION</scope>
</reference>
<reference key="5">
    <citation type="journal article" date="2013" name="ACS Chem. Biol.">
        <title>Tyrosine O-prenyltransferase SirD catalyzes S-, C-, and N-prenylations on tyrosine and tryptophan derivatives.</title>
        <authorList>
            <person name="Rudolf J.D."/>
            <person name="Poulter C.D."/>
        </authorList>
    </citation>
    <scope>FUNCTION</scope>
</reference>
<reference key="6">
    <citation type="journal article" date="2016" name="PLoS ONE">
        <title>The epipolythiodiketopiperazine gene cluster in Claviceps purpurea: dysfunctional cytochrome P450 enzyme prevents formation of the previously unknown clapurines.</title>
        <authorList>
            <person name="Dopstadt J."/>
            <person name="Neubauer L."/>
            <person name="Tudzynski P."/>
            <person name="Humpf H.U."/>
        </authorList>
    </citation>
    <scope>FUNCTION</scope>
</reference>
<organism>
    <name type="scientific">Leptosphaeria maculans</name>
    <name type="common">Blackleg fungus</name>
    <name type="synonym">Phoma lingam</name>
    <dbReference type="NCBI Taxonomy" id="5022"/>
    <lineage>
        <taxon>Eukaryota</taxon>
        <taxon>Fungi</taxon>
        <taxon>Dikarya</taxon>
        <taxon>Ascomycota</taxon>
        <taxon>Pezizomycotina</taxon>
        <taxon>Dothideomycetes</taxon>
        <taxon>Pleosporomycetidae</taxon>
        <taxon>Pleosporales</taxon>
        <taxon>Pleosporineae</taxon>
        <taxon>Leptosphaeriaceae</taxon>
        <taxon>Plenodomus</taxon>
        <taxon>Plenodomus lingam/Leptosphaeria maculans species complex</taxon>
    </lineage>
</organism>
<feature type="chain" id="PRO_0000437723" description="O-methyltransferase sirM">
    <location>
        <begin position="1"/>
        <end position="414"/>
    </location>
</feature>
<feature type="active site" description="Proton acceptor" evidence="1">
    <location>
        <position position="321"/>
    </location>
</feature>
<feature type="binding site" evidence="1">
    <location>
        <position position="270"/>
    </location>
    <ligand>
        <name>S-adenosyl-L-methionine</name>
        <dbReference type="ChEBI" id="CHEBI:59789"/>
    </ligand>
</feature>
<keyword id="KW-0489">Methyltransferase</keyword>
<keyword id="KW-0949">S-adenosyl-L-methionine</keyword>
<keyword id="KW-0808">Transferase</keyword>
<keyword id="KW-0843">Virulence</keyword>
<proteinExistence type="inferred from homology"/>
<protein>
    <recommendedName>
        <fullName evidence="7">O-methyltransferase sirM</fullName>
        <ecNumber evidence="1">2.1.1.-</ecNumber>
    </recommendedName>
    <alternativeName>
        <fullName evidence="6">Sirodesmin biosynthesis protein M</fullName>
    </alternativeName>
</protein>
<comment type="function">
    <text evidence="2 3 4 5 8 9">O-methyltransferase; part of the gene cluster that mediates the biosynthesis of sirodesmin PL, an epipolythiodioxopiperazine (ETP) characterized by a disulfide bridged cyclic dipeptide and that acts as a phytotoxin which is involved in the blackleg didease of canola (PubMed:15387811, PubMed:18272357, PubMed:19762440). SirD catalyzes the O-prenylation of L-tyrosine (L-Tyr) in the presence of dimethylallyl diphosphate (DMAPP) to yield 4-O-dimethylallyl-L-Tyr, and therefore represents probably the first pathway-specific enzyme in the biosynthesis of sirodesmin PL (PubMed:19762440, PubMed:21038099, PubMed:24083562). 4-O-dimethylallyl-L-Tyr, then undergoes condensation with L-Ser in a reaction catalyzed by the non-ribosomal peptide synthase sirP to form the diketopiperazine (DKP) backbone (PubMed:18272357). Further bishydroxylation of the DKP performed by the cytochrome P450 monooxygenase sirC leads to the production of the intermediate phomamide (PubMed:27390873). This step is essential to form the reactive thiol group required for toxicity of sirodesmin PL (PubMed:27390873). The next steps of sirodesmin biosynthesis are not well understood yet, but some predictions could be made from intermediate compounds identification (PubMed:18272357). Phomamide is converted into phomalizarine via oxidation, probably by sirT (PubMed:18272357). Further oxidation, methylation (by sirM or sirN) and reduction steps convert phomalizarine to deacetyl sirodesmin (PubMed:18272357). Finally, acetyltransferase sirH probably acetylates deacetyl sirodesmin to produce sirodesmin PL (PubMed:18272357).</text>
</comment>
<comment type="pathway">
    <text evidence="8">Mycotoxin biosynthesis.</text>
</comment>
<comment type="similarity">
    <text evidence="1">Belongs to the class I-like SAM-binding methyltransferase superfamily. Cation-independent O-methyltransferase family. COMT subfamily.</text>
</comment>
<sequence>MDNELDNLISLLQKSKASLKEKHGDRIRSIFAAHHSGSILPKEDKSLYDKCLATVDLLDEVQQMLTPPLHTLIDGFFGFINSKTLLCAVEFGIPDALSQGPKSIEQLASSSPQGELSPHRLTQVLRTLTGIGIFNYDKTSKLYSNNATSDLITTAHWSKWVYWTKFYPTEFYDMMRFLPDHIKANASRTAAQSNYNTDMEFYEYLSNSGLAKEFHRVLGAGATAQLPGMISDFPWDTLGDETVLDLGTGSGEFLFQLLENYPRMRGAFMDIPSTISRIQAECEQPGGRFSGVRDRVAGFHAGNFLDEVPASVVYTIKWCLHNWSDEDTIKILQNIRRAIVVKPEARLLIIESVLEDGRTGRPARYGDIIMMATCNGKERDIENWQAVCEQSGWEVVKSWALRNSIPSCLELRPI</sequence>
<name>SIRM_LEPMC</name>
<accession>Q6Q880</accession>
<evidence type="ECO:0000255" key="1">
    <source>
        <dbReference type="PROSITE-ProRule" id="PRU01020"/>
    </source>
</evidence>
<evidence type="ECO:0000269" key="2">
    <source>
    </source>
</evidence>
<evidence type="ECO:0000269" key="3">
    <source>
    </source>
</evidence>
<evidence type="ECO:0000269" key="4">
    <source>
    </source>
</evidence>
<evidence type="ECO:0000269" key="5">
    <source>
    </source>
</evidence>
<evidence type="ECO:0000303" key="6">
    <source>
    </source>
</evidence>
<evidence type="ECO:0000305" key="7"/>
<evidence type="ECO:0000305" key="8">
    <source>
    </source>
</evidence>
<evidence type="ECO:0000305" key="9">
    <source>
    </source>
</evidence>